<keyword id="KW-0119">Carbohydrate metabolism</keyword>
<keyword id="KW-0378">Hydrolase</keyword>
<keyword id="KW-0464">Manganese</keyword>
<feature type="chain" id="PRO_0000359982" description="Fructose-1,6-bisphosphatase class 3">
    <location>
        <begin position="1"/>
        <end position="654"/>
    </location>
</feature>
<feature type="region of interest" description="Disordered" evidence="2">
    <location>
        <begin position="288"/>
        <end position="307"/>
    </location>
</feature>
<feature type="compositionally biased region" description="Basic and acidic residues" evidence="2">
    <location>
        <begin position="298"/>
        <end position="307"/>
    </location>
</feature>
<name>F16PC_STAAB</name>
<gene>
    <name evidence="1" type="primary">fbp</name>
    <name type="ordered locus">SAB2390</name>
</gene>
<proteinExistence type="inferred from homology"/>
<comment type="catalytic activity">
    <reaction evidence="1">
        <text>beta-D-fructose 1,6-bisphosphate + H2O = beta-D-fructose 6-phosphate + phosphate</text>
        <dbReference type="Rhea" id="RHEA:11064"/>
        <dbReference type="ChEBI" id="CHEBI:15377"/>
        <dbReference type="ChEBI" id="CHEBI:32966"/>
        <dbReference type="ChEBI" id="CHEBI:43474"/>
        <dbReference type="ChEBI" id="CHEBI:57634"/>
        <dbReference type="EC" id="3.1.3.11"/>
    </reaction>
</comment>
<comment type="cofactor">
    <cofactor evidence="1">
        <name>Mn(2+)</name>
        <dbReference type="ChEBI" id="CHEBI:29035"/>
    </cofactor>
</comment>
<comment type="pathway">
    <text evidence="1">Carbohydrate biosynthesis; gluconeogenesis.</text>
</comment>
<comment type="similarity">
    <text evidence="1">Belongs to the FBPase class 3 family.</text>
</comment>
<sequence length="654" mass="76346">MTQITERELKKKYLDLLSQRFDTPEKLATEIINLESILELPKGTEHFVSDLHGEYEAFQHVLRNGSGNVRAKINDIFKDKLSTKELNDLTALVYYPEDKLQLIKCDFQNYGQLNVWYITTIEHLIQLIKYCSSKYTRSKLRRALPEQYVFIVEELLYKNNEFKNKKSYYETLVNQVIELKQADDLIIGLAYSVQRLVVDHLHVVGDIYDRGPQPDKIMDTLINYHSLDIQWGNHDVLWVGAYAGSKVCLANLLRICARYDNLDIVEDAYGINLRPLLTLAEKYYDADNPAFKPKKRPDKHERLTQREESQITKIHQAIAMIQFKLEIPVIKRRPNFEMDERLVLEKVNYDTNEITVYRKTYPLKDTCFQTVNRDNPAELLPEEEEVMNKLLLSFQQSEKLRRHMSFLMRKGSLYLPCNGNLLIHGCIPVDENGEMESFEIDGQTYSGQELLDVFEYHVRKSFDEKENTDDLSTDLVWYLWTGKYSSLFGKRAMTTFERYFIADKASHKEEKNPYYHLREDVNMVRKMLSDFGLNPDEGRIINGHTPVKEINGEDPIKADGKMLVIDGGFSKAYQSTTGIAGYTLLYNSFGMQLVAHQQFNAKEKILSEGIEELSIKRIVDKELQRKKIRNTNKGKELQAQIDILKMLMHDRYLD</sequence>
<reference key="1">
    <citation type="journal article" date="2007" name="PLoS ONE">
        <title>Molecular correlates of host specialization in Staphylococcus aureus.</title>
        <authorList>
            <person name="Herron-Olson L."/>
            <person name="Fitzgerald J.R."/>
            <person name="Musser J.M."/>
            <person name="Kapur V."/>
        </authorList>
    </citation>
    <scope>NUCLEOTIDE SEQUENCE [LARGE SCALE GENOMIC DNA]</scope>
    <source>
        <strain>bovine RF122 / ET3-1</strain>
    </source>
</reference>
<organism>
    <name type="scientific">Staphylococcus aureus (strain bovine RF122 / ET3-1)</name>
    <dbReference type="NCBI Taxonomy" id="273036"/>
    <lineage>
        <taxon>Bacteria</taxon>
        <taxon>Bacillati</taxon>
        <taxon>Bacillota</taxon>
        <taxon>Bacilli</taxon>
        <taxon>Bacillales</taxon>
        <taxon>Staphylococcaceae</taxon>
        <taxon>Staphylococcus</taxon>
    </lineage>
</organism>
<evidence type="ECO:0000255" key="1">
    <source>
        <dbReference type="HAMAP-Rule" id="MF_01854"/>
    </source>
</evidence>
<evidence type="ECO:0000256" key="2">
    <source>
        <dbReference type="SAM" id="MobiDB-lite"/>
    </source>
</evidence>
<protein>
    <recommendedName>
        <fullName evidence="1">Fructose-1,6-bisphosphatase class 3</fullName>
        <shortName evidence="1">FBPase class 3</shortName>
        <ecNumber evidence="1">3.1.3.11</ecNumber>
    </recommendedName>
    <alternativeName>
        <fullName evidence="1">D-fructose-1,6-bisphosphate 1-phosphohydrolase class 3</fullName>
    </alternativeName>
</protein>
<dbReference type="EC" id="3.1.3.11" evidence="1"/>
<dbReference type="EMBL" id="AJ938182">
    <property type="protein sequence ID" value="CAI82078.1"/>
    <property type="molecule type" value="Genomic_DNA"/>
</dbReference>
<dbReference type="RefSeq" id="WP_000192188.1">
    <property type="nucleotide sequence ID" value="NC_007622.1"/>
</dbReference>
<dbReference type="KEGG" id="sab:SAB2390"/>
<dbReference type="HOGENOM" id="CLU_028392_2_0_9"/>
<dbReference type="UniPathway" id="UPA00138"/>
<dbReference type="GO" id="GO:0042132">
    <property type="term" value="F:fructose 1,6-bisphosphate 1-phosphatase activity"/>
    <property type="evidence" value="ECO:0007669"/>
    <property type="project" value="UniProtKB-UniRule"/>
</dbReference>
<dbReference type="GO" id="GO:0006094">
    <property type="term" value="P:gluconeogenesis"/>
    <property type="evidence" value="ECO:0007669"/>
    <property type="project" value="UniProtKB-UniRule"/>
</dbReference>
<dbReference type="Gene3D" id="3.60.21.10">
    <property type="match status" value="1"/>
</dbReference>
<dbReference type="HAMAP" id="MF_01854">
    <property type="entry name" value="FBPase_class3"/>
    <property type="match status" value="1"/>
</dbReference>
<dbReference type="InterPro" id="IPR009164">
    <property type="entry name" value="FBPtase_class3"/>
</dbReference>
<dbReference type="InterPro" id="IPR029052">
    <property type="entry name" value="Metallo-depent_PP-like"/>
</dbReference>
<dbReference type="Pfam" id="PF06874">
    <property type="entry name" value="FBPase_2"/>
    <property type="match status" value="1"/>
</dbReference>
<dbReference type="PIRSF" id="PIRSF000906">
    <property type="entry name" value="FBPtase_Bacill"/>
    <property type="match status" value="1"/>
</dbReference>
<dbReference type="SUPFAM" id="SSF56300">
    <property type="entry name" value="Metallo-dependent phosphatases"/>
    <property type="match status" value="2"/>
</dbReference>
<accession>Q2YW94</accession>